<geneLocation type="chloroplast"/>
<organism>
    <name type="scientific">Psathyrostachys juncea</name>
    <name type="common">Russian wildrye</name>
    <dbReference type="NCBI Taxonomy" id="4586"/>
    <lineage>
        <taxon>Eukaryota</taxon>
        <taxon>Viridiplantae</taxon>
        <taxon>Streptophyta</taxon>
        <taxon>Embryophyta</taxon>
        <taxon>Tracheophyta</taxon>
        <taxon>Spermatophyta</taxon>
        <taxon>Magnoliopsida</taxon>
        <taxon>Liliopsida</taxon>
        <taxon>Poales</taxon>
        <taxon>Poaceae</taxon>
        <taxon>BOP clade</taxon>
        <taxon>Pooideae</taxon>
        <taxon>Triticodae</taxon>
        <taxon>Triticeae</taxon>
        <taxon>Hordeinae</taxon>
        <taxon>Psathyrostachys</taxon>
    </lineage>
</organism>
<accession>Q7H6F6</accession>
<sequence length="339" mass="38917">MVREEVAGSTQTLQWKCVESRVDSKRLYYGRFILSPLRKGQADTVGIALRRALLGEIEGTCITRAKFGSVPHEYSTIAGIEESVQEILLNLKEIVLRSNLYGVRDASICVKGPRYITAQDIILPPSVEIVDTAQPIANLTEPIDFCIDLQIKRDRGYQTELRKNYQDGSYPIDAVSMPVRNVNYSIFSCGNGNEKHEILFLEIWTNGSLTPKEALYEASRNLIDLFLPFLHAEEEGTSFEENKNRFTPPLFTFQKRLTNLKKNKKGIPLNCIFIDQLELTSRTYNCLKRANIHTLLDLLSKTEEDLMRIDSFRMEDRKHIWDTLEKHLPIDLLKNKLSF</sequence>
<proteinExistence type="inferred from homology"/>
<dbReference type="EC" id="2.7.7.6" evidence="1"/>
<dbReference type="EMBL" id="AY115968">
    <property type="protein sequence ID" value="AAM97477.1"/>
    <property type="molecule type" value="Genomic_DNA"/>
</dbReference>
<dbReference type="EMBL" id="AY607061">
    <property type="protein sequence ID" value="AAU11117.1"/>
    <property type="molecule type" value="Genomic_DNA"/>
</dbReference>
<dbReference type="RefSeq" id="YP_009672170.1">
    <property type="nucleotide sequence ID" value="NC_043838.1"/>
</dbReference>
<dbReference type="SMR" id="Q7H6F6"/>
<dbReference type="GeneID" id="40879925"/>
<dbReference type="GO" id="GO:0009507">
    <property type="term" value="C:chloroplast"/>
    <property type="evidence" value="ECO:0007669"/>
    <property type="project" value="UniProtKB-SubCell"/>
</dbReference>
<dbReference type="GO" id="GO:0000428">
    <property type="term" value="C:DNA-directed RNA polymerase complex"/>
    <property type="evidence" value="ECO:0007669"/>
    <property type="project" value="UniProtKB-KW"/>
</dbReference>
<dbReference type="GO" id="GO:0005739">
    <property type="term" value="C:mitochondrion"/>
    <property type="evidence" value="ECO:0007669"/>
    <property type="project" value="GOC"/>
</dbReference>
<dbReference type="GO" id="GO:0003677">
    <property type="term" value="F:DNA binding"/>
    <property type="evidence" value="ECO:0007669"/>
    <property type="project" value="UniProtKB-UniRule"/>
</dbReference>
<dbReference type="GO" id="GO:0003899">
    <property type="term" value="F:DNA-directed RNA polymerase activity"/>
    <property type="evidence" value="ECO:0007669"/>
    <property type="project" value="UniProtKB-UniRule"/>
</dbReference>
<dbReference type="GO" id="GO:0046983">
    <property type="term" value="F:protein dimerization activity"/>
    <property type="evidence" value="ECO:0007669"/>
    <property type="project" value="InterPro"/>
</dbReference>
<dbReference type="GO" id="GO:0006351">
    <property type="term" value="P:DNA-templated transcription"/>
    <property type="evidence" value="ECO:0007669"/>
    <property type="project" value="UniProtKB-UniRule"/>
</dbReference>
<dbReference type="CDD" id="cd06928">
    <property type="entry name" value="RNAP_alpha_NTD"/>
    <property type="match status" value="1"/>
</dbReference>
<dbReference type="FunFam" id="1.10.150.20:FF:000021">
    <property type="entry name" value="DNA-directed RNA polymerase subunit alpha"/>
    <property type="match status" value="1"/>
</dbReference>
<dbReference type="FunFam" id="2.170.120.12:FF:000001">
    <property type="entry name" value="DNA-directed RNA polymerase subunit alpha"/>
    <property type="match status" value="1"/>
</dbReference>
<dbReference type="Gene3D" id="1.10.150.20">
    <property type="entry name" value="5' to 3' exonuclease, C-terminal subdomain"/>
    <property type="match status" value="1"/>
</dbReference>
<dbReference type="Gene3D" id="2.170.120.12">
    <property type="entry name" value="DNA-directed RNA polymerase, insert domain"/>
    <property type="match status" value="1"/>
</dbReference>
<dbReference type="Gene3D" id="3.30.1360.10">
    <property type="entry name" value="RNA polymerase, RBP11-like subunit"/>
    <property type="match status" value="1"/>
</dbReference>
<dbReference type="HAMAP" id="MF_00059">
    <property type="entry name" value="RNApol_bact_RpoA"/>
    <property type="match status" value="1"/>
</dbReference>
<dbReference type="InterPro" id="IPR011262">
    <property type="entry name" value="DNA-dir_RNA_pol_insert"/>
</dbReference>
<dbReference type="InterPro" id="IPR011263">
    <property type="entry name" value="DNA-dir_RNA_pol_RpoA/D/Rpb3"/>
</dbReference>
<dbReference type="InterPro" id="IPR011773">
    <property type="entry name" value="DNA-dir_RpoA"/>
</dbReference>
<dbReference type="InterPro" id="IPR036603">
    <property type="entry name" value="RBP11-like"/>
</dbReference>
<dbReference type="InterPro" id="IPR011260">
    <property type="entry name" value="RNAP_asu_C"/>
</dbReference>
<dbReference type="InterPro" id="IPR036643">
    <property type="entry name" value="RNApol_insert_sf"/>
</dbReference>
<dbReference type="NCBIfam" id="TIGR02027">
    <property type="entry name" value="rpoA"/>
    <property type="match status" value="1"/>
</dbReference>
<dbReference type="Pfam" id="PF01000">
    <property type="entry name" value="RNA_pol_A_bac"/>
    <property type="match status" value="1"/>
</dbReference>
<dbReference type="Pfam" id="PF03118">
    <property type="entry name" value="RNA_pol_A_CTD"/>
    <property type="match status" value="1"/>
</dbReference>
<dbReference type="Pfam" id="PF01193">
    <property type="entry name" value="RNA_pol_L"/>
    <property type="match status" value="1"/>
</dbReference>
<dbReference type="SMART" id="SM00662">
    <property type="entry name" value="RPOLD"/>
    <property type="match status" value="1"/>
</dbReference>
<dbReference type="SUPFAM" id="SSF47789">
    <property type="entry name" value="C-terminal domain of RNA polymerase alpha subunit"/>
    <property type="match status" value="1"/>
</dbReference>
<dbReference type="SUPFAM" id="SSF56553">
    <property type="entry name" value="Insert subdomain of RNA polymerase alpha subunit"/>
    <property type="match status" value="1"/>
</dbReference>
<dbReference type="SUPFAM" id="SSF55257">
    <property type="entry name" value="RBP11-like subunits of RNA polymerase"/>
    <property type="match status" value="1"/>
</dbReference>
<comment type="function">
    <text evidence="1">DNA-dependent RNA polymerase catalyzes the transcription of DNA into RNA using the four ribonucleoside triphosphates as substrates.</text>
</comment>
<comment type="catalytic activity">
    <reaction evidence="1">
        <text>RNA(n) + a ribonucleoside 5'-triphosphate = RNA(n+1) + diphosphate</text>
        <dbReference type="Rhea" id="RHEA:21248"/>
        <dbReference type="Rhea" id="RHEA-COMP:14527"/>
        <dbReference type="Rhea" id="RHEA-COMP:17342"/>
        <dbReference type="ChEBI" id="CHEBI:33019"/>
        <dbReference type="ChEBI" id="CHEBI:61557"/>
        <dbReference type="ChEBI" id="CHEBI:140395"/>
        <dbReference type="EC" id="2.7.7.6"/>
    </reaction>
</comment>
<comment type="subunit">
    <text evidence="1">In plastids the minimal PEP RNA polymerase catalytic core is composed of four subunits: alpha, beta, beta', and beta''. When a (nuclear-encoded) sigma factor is associated with the core the holoenzyme is formed, which can initiate transcription.</text>
</comment>
<comment type="subcellular location">
    <subcellularLocation>
        <location>Plastid</location>
        <location>Chloroplast</location>
    </subcellularLocation>
</comment>
<comment type="domain">
    <text evidence="1">The N-terminal domain is essential for RNAP assembly and basal transcription, whereas the C-terminal domain is involved in interaction with transcriptional regulators and with upstream promoter elements.</text>
</comment>
<comment type="similarity">
    <text evidence="1">Belongs to the RNA polymerase alpha chain family.</text>
</comment>
<reference key="1">
    <citation type="journal article" date="2002" name="Genome">
        <title>Phylogenetic analysis of North American Elymus and the monogenomic Triticeae (Poaceae) using three chloroplast DNA data sets.</title>
        <authorList>
            <person name="Mason-Gamer R.J."/>
            <person name="Orme N.L."/>
            <person name="Anderson C.M."/>
        </authorList>
    </citation>
    <scope>NUCLEOTIDE SEQUENCE [GENOMIC DNA]</scope>
</reference>
<reference key="2">
    <citation type="journal article" date="2004" name="Plant Syst. Evol.">
        <title>A phylogenetic analysis of the genus Psathyrostachys (Poaceae) based on one nuclear gene, three plastid genes, and morphology.</title>
        <authorList>
            <person name="Petersen G."/>
            <person name="Seberg O."/>
            <person name="Baden C."/>
        </authorList>
    </citation>
    <scope>NUCLEOTIDE SEQUENCE [GENOMIC DNA]</scope>
</reference>
<feature type="chain" id="PRO_0000175485" description="DNA-directed RNA polymerase subunit alpha">
    <location>
        <begin position="1"/>
        <end position="339"/>
    </location>
</feature>
<feature type="region of interest" description="Alpha N-terminal domain (alpha-NTD)" evidence="1">
    <location>
        <begin position="1"/>
        <end position="233"/>
    </location>
</feature>
<feature type="region of interest" description="Alpha C-terminal domain (alpha-CTD)" evidence="1">
    <location>
        <begin position="266"/>
        <end position="339"/>
    </location>
</feature>
<keyword id="KW-0150">Chloroplast</keyword>
<keyword id="KW-0240">DNA-directed RNA polymerase</keyword>
<keyword id="KW-0548">Nucleotidyltransferase</keyword>
<keyword id="KW-0934">Plastid</keyword>
<keyword id="KW-0804">Transcription</keyword>
<keyword id="KW-0808">Transferase</keyword>
<protein>
    <recommendedName>
        <fullName evidence="1">DNA-directed RNA polymerase subunit alpha</fullName>
        <shortName evidence="1">PEP</shortName>
        <ecNumber evidence="1">2.7.7.6</ecNumber>
    </recommendedName>
    <alternativeName>
        <fullName evidence="1">Plastid-encoded RNA polymerase subunit alpha</fullName>
        <shortName evidence="1">RNA polymerase subunit alpha</shortName>
    </alternativeName>
</protein>
<evidence type="ECO:0000255" key="1">
    <source>
        <dbReference type="HAMAP-Rule" id="MF_00059"/>
    </source>
</evidence>
<gene>
    <name evidence="1" type="primary">rpoA</name>
</gene>
<name>RPOA_PSAJU</name>